<reference key="1">
    <citation type="submission" date="2007-03" db="EMBL/GenBank/DDBJ databases">
        <title>Complete sequence of chromosome of Methanococcus maripaludis C5.</title>
        <authorList>
            <consortium name="US DOE Joint Genome Institute"/>
            <person name="Copeland A."/>
            <person name="Lucas S."/>
            <person name="Lapidus A."/>
            <person name="Barry K."/>
            <person name="Glavina del Rio T."/>
            <person name="Dalin E."/>
            <person name="Tice H."/>
            <person name="Pitluck S."/>
            <person name="Chertkov O."/>
            <person name="Brettin T."/>
            <person name="Bruce D."/>
            <person name="Han C."/>
            <person name="Detter J.C."/>
            <person name="Schmutz J."/>
            <person name="Larimer F."/>
            <person name="Land M."/>
            <person name="Hauser L."/>
            <person name="Kyrpides N."/>
            <person name="Mikhailova N."/>
            <person name="Sieprawska-Lupa M."/>
            <person name="Whitman W.B."/>
            <person name="Richardson P."/>
        </authorList>
    </citation>
    <scope>NUCLEOTIDE SEQUENCE [LARGE SCALE GENOMIC DNA]</scope>
    <source>
        <strain>C5 / ATCC BAA-1333</strain>
    </source>
</reference>
<organism>
    <name type="scientific">Methanococcus maripaludis (strain C5 / ATCC BAA-1333)</name>
    <dbReference type="NCBI Taxonomy" id="402880"/>
    <lineage>
        <taxon>Archaea</taxon>
        <taxon>Methanobacteriati</taxon>
        <taxon>Methanobacteriota</taxon>
        <taxon>Methanomada group</taxon>
        <taxon>Methanococci</taxon>
        <taxon>Methanococcales</taxon>
        <taxon>Methanococcaceae</taxon>
        <taxon>Methanococcus</taxon>
    </lineage>
</organism>
<feature type="chain" id="PRO_1000002341" description="Small ribosomal subunit protein eS8">
    <location>
        <begin position="1"/>
        <end position="128"/>
    </location>
</feature>
<accession>A4G0R4</accession>
<comment type="subunit">
    <text evidence="1">Part of the 30S ribosomal subunit.</text>
</comment>
<comment type="similarity">
    <text evidence="1">Belongs to the eukaryotic ribosomal protein eS8 family.</text>
</comment>
<keyword id="KW-0687">Ribonucleoprotein</keyword>
<keyword id="KW-0689">Ribosomal protein</keyword>
<proteinExistence type="inferred from homology"/>
<evidence type="ECO:0000255" key="1">
    <source>
        <dbReference type="HAMAP-Rule" id="MF_00029"/>
    </source>
</evidence>
<evidence type="ECO:0000305" key="2"/>
<dbReference type="EMBL" id="CP000609">
    <property type="protein sequence ID" value="ABO36048.1"/>
    <property type="molecule type" value="Genomic_DNA"/>
</dbReference>
<dbReference type="RefSeq" id="WP_011869494.1">
    <property type="nucleotide sequence ID" value="NC_009135.1"/>
</dbReference>
<dbReference type="SMR" id="A4G0R4"/>
<dbReference type="STRING" id="402880.MmarC5_1751"/>
<dbReference type="GeneID" id="4927986"/>
<dbReference type="KEGG" id="mmq:MmarC5_1751"/>
<dbReference type="eggNOG" id="arCOG04154">
    <property type="taxonomic scope" value="Archaea"/>
</dbReference>
<dbReference type="HOGENOM" id="CLU_080597_2_1_2"/>
<dbReference type="OrthoDB" id="372305at2157"/>
<dbReference type="Proteomes" id="UP000000253">
    <property type="component" value="Chromosome"/>
</dbReference>
<dbReference type="GO" id="GO:1990904">
    <property type="term" value="C:ribonucleoprotein complex"/>
    <property type="evidence" value="ECO:0007669"/>
    <property type="project" value="UniProtKB-KW"/>
</dbReference>
<dbReference type="GO" id="GO:0005840">
    <property type="term" value="C:ribosome"/>
    <property type="evidence" value="ECO:0007669"/>
    <property type="project" value="UniProtKB-KW"/>
</dbReference>
<dbReference type="GO" id="GO:0003735">
    <property type="term" value="F:structural constituent of ribosome"/>
    <property type="evidence" value="ECO:0007669"/>
    <property type="project" value="InterPro"/>
</dbReference>
<dbReference type="GO" id="GO:0006412">
    <property type="term" value="P:translation"/>
    <property type="evidence" value="ECO:0007669"/>
    <property type="project" value="UniProtKB-UniRule"/>
</dbReference>
<dbReference type="CDD" id="cd11382">
    <property type="entry name" value="Ribosomal_S8e"/>
    <property type="match status" value="1"/>
</dbReference>
<dbReference type="FunFam" id="2.40.10.310:FF:000002">
    <property type="entry name" value="30S ribosomal protein S8e"/>
    <property type="match status" value="1"/>
</dbReference>
<dbReference type="Gene3D" id="2.40.10.310">
    <property type="match status" value="1"/>
</dbReference>
<dbReference type="HAMAP" id="MF_00029">
    <property type="entry name" value="Ribosomal_eS8"/>
    <property type="match status" value="1"/>
</dbReference>
<dbReference type="InterPro" id="IPR001047">
    <property type="entry name" value="Ribosomal_eS8"/>
</dbReference>
<dbReference type="InterPro" id="IPR018283">
    <property type="entry name" value="Ribosomal_eS8_CS"/>
</dbReference>
<dbReference type="InterPro" id="IPR020919">
    <property type="entry name" value="Ribosomal_protein_eS8_arc"/>
</dbReference>
<dbReference type="InterPro" id="IPR022309">
    <property type="entry name" value="Ribosomal_Se8/biogenesis_NSA2"/>
</dbReference>
<dbReference type="NCBIfam" id="TIGR00307">
    <property type="entry name" value="eS8"/>
    <property type="match status" value="1"/>
</dbReference>
<dbReference type="PANTHER" id="PTHR10394">
    <property type="entry name" value="40S RIBOSOMAL PROTEIN S8"/>
    <property type="match status" value="1"/>
</dbReference>
<dbReference type="Pfam" id="PF01201">
    <property type="entry name" value="Ribosomal_S8e"/>
    <property type="match status" value="1"/>
</dbReference>
<dbReference type="PROSITE" id="PS01193">
    <property type="entry name" value="RIBOSOMAL_S8E"/>
    <property type="match status" value="1"/>
</dbReference>
<sequence>MAIWQGASRRLSTGAKVWRAAKKHKREMGRPAAETQVSEVIKRKIVRCRGANLKVKLEKTNYANVFDQANNVCKKVAVTKVLDNKANKHYIRRNVMTKGAIIETEMGKAKVTSRPGQDGVVNAVLITE</sequence>
<protein>
    <recommendedName>
        <fullName evidence="1">Small ribosomal subunit protein eS8</fullName>
    </recommendedName>
    <alternativeName>
        <fullName evidence="2">30S ribosomal protein S8e</fullName>
    </alternativeName>
</protein>
<name>RS8E_METM5</name>
<gene>
    <name evidence="1" type="primary">rps8e</name>
    <name type="ordered locus">MmarC5_1751</name>
</gene>